<accession>P43662</accession>
<keyword id="KW-0998">Cell outer membrane</keyword>
<keyword id="KW-1015">Disulfide bond</keyword>
<keyword id="KW-1029">Fimbrium biogenesis</keyword>
<keyword id="KW-0472">Membrane</keyword>
<keyword id="KW-1185">Reference proteome</keyword>
<keyword id="KW-0732">Signal</keyword>
<keyword id="KW-0812">Transmembrane</keyword>
<keyword id="KW-1134">Transmembrane beta strand</keyword>
<keyword id="KW-0813">Transport</keyword>
<feature type="signal peptide" evidence="2">
    <location>
        <begin position="1"/>
        <end position="21"/>
    </location>
</feature>
<feature type="chain" id="PRO_0000009320" description="Outer membrane usher protein LpfC">
    <location>
        <begin position="22"/>
        <end position="842"/>
    </location>
</feature>
<feature type="disulfide bond" evidence="2">
    <location>
        <begin position="819"/>
        <end position="841"/>
    </location>
</feature>
<feature type="sequence conflict" description="In Ref. 1; AAA73968." evidence="3" ref="1">
    <original>S</original>
    <variation>T</variation>
    <location>
        <position position="490"/>
    </location>
</feature>
<feature type="sequence conflict" description="In Ref. 1; AAA73968." evidence="3" ref="1">
    <original>Y</original>
    <variation>H</variation>
    <location>
        <position position="647"/>
    </location>
</feature>
<feature type="sequence conflict" description="In Ref. 1; AAA73968." evidence="3" ref="1">
    <original>NYGLR</original>
    <variation>ELRFG</variation>
    <location>
        <begin position="655"/>
        <end position="659"/>
    </location>
</feature>
<feature type="sequence conflict" description="In Ref. 1; AAA73968." evidence="3" ref="1">
    <original>GA</original>
    <variation>AR</variation>
    <location>
        <begin position="689"/>
        <end position="690"/>
    </location>
</feature>
<feature type="sequence conflict" description="In Ref. 1; AAA73968." evidence="3" ref="1">
    <original>PE</original>
    <variation>RQ</variation>
    <location>
        <begin position="802"/>
        <end position="803"/>
    </location>
</feature>
<sequence>MTWTHLPLGNKTSRFTQSALALMIAGTLPAYAGTFNPRFLEDVPGIDQHVDLSMYESNKAEHLPGKYRVSVVVNEKKMESRTLEFKAATEAQRAKMGESLVPCLSRVQLEDMGVRIDSFPALKMAPPEACVAFDDIIPQAASHFDFADQTLIMSFPQAAMKQTARGTVPESQWDEGVNALLVDYNFSGSNASYDAHDSETSYNSDSYYLNLRSGMNLGAWRLRNYSTWTRNDGNNTWDNIGTSLSRAIVPLKSQLTLGDTSTAGDIFDSVQMRGVQLTSDEEMLPDSQRGFAPVIRGIAKSNAEVTVEQNNYVIYRTFVQPGAFEINDLYPTSNSGDLTVTIKESDGSEQKFVQPFSSVALLQREGHLKYSLSAGEYRAGNYNSAEPKFGQLDAMYGLPYGFTVYGGAIFSDDYYSLAGGLGKNFGYIGAISIDVTQAKSKLANEENSEGQSYRFLYSKSFNSGTDFRLLGYKYSTSGYYTFQEATDVRSDADSSYSQYHKRSQIQGNVTQQLGAWGSVYFNVTQQDYWNDEGKQRSLNAGYNGRIGRVNYSVAYTWTKSPEWDESDRLLSFSMSIPLGRVWSNYHLTTDQHGRTNQQLGVSGTALEDHNLNYSVQEGYGSNGVGNSGSVNLDYQGGVGSASLGYNYNRDGQQVNYGLRGGVIAHSEGITLSQPLGESMAIISAPGARGAHVINNGGVEVDWMGNAVVPYLTPYRETEVSLRSDSLNNQVDLDTASVNVVPTRGAIVRARFDTRVGYRVLMNLTQANGKAVPFGATATLLDTTKESSSIVGEDGQLYISGMPEKGALQVNWGKDQAQQCRVAFTLPEQQDNTGVVMANAVCR</sequence>
<proteinExistence type="inferred from homology"/>
<reference key="1">
    <citation type="journal article" date="1995" name="J. Bacteriol.">
        <title>Identification and sequence analysis of lpfABCDE, a putative fimbrial operon of Salmonella typhimurium.</title>
        <authorList>
            <person name="Baeumler A.J."/>
            <person name="Heffron F."/>
        </authorList>
    </citation>
    <scope>NUCLEOTIDE SEQUENCE [GENOMIC DNA]</scope>
    <source>
        <strain>ATCC 14028 / SGSG 2980 / CDC 6516-60 / NCTC 12023</strain>
    </source>
</reference>
<reference key="2">
    <citation type="journal article" date="2001" name="Nature">
        <title>Complete genome sequence of Salmonella enterica serovar Typhimurium LT2.</title>
        <authorList>
            <person name="McClelland M."/>
            <person name="Sanderson K.E."/>
            <person name="Spieth J."/>
            <person name="Clifton S.W."/>
            <person name="Latreille P."/>
            <person name="Courtney L."/>
            <person name="Porwollik S."/>
            <person name="Ali J."/>
            <person name="Dante M."/>
            <person name="Du F."/>
            <person name="Hou S."/>
            <person name="Layman D."/>
            <person name="Leonard S."/>
            <person name="Nguyen C."/>
            <person name="Scott K."/>
            <person name="Holmes A."/>
            <person name="Grewal N."/>
            <person name="Mulvaney E."/>
            <person name="Ryan E."/>
            <person name="Sun H."/>
            <person name="Florea L."/>
            <person name="Miller W."/>
            <person name="Stoneking T."/>
            <person name="Nhan M."/>
            <person name="Waterston R."/>
            <person name="Wilson R.K."/>
        </authorList>
    </citation>
    <scope>NUCLEOTIDE SEQUENCE [LARGE SCALE GENOMIC DNA]</scope>
    <source>
        <strain>LT2 / SGSC1412 / ATCC 700720</strain>
    </source>
</reference>
<comment type="function">
    <text>Involved in the export and assembly of LpfA fimbrial subunits across the outer membrane.</text>
</comment>
<comment type="subcellular location">
    <subcellularLocation>
        <location evidence="1">Cell outer membrane</location>
        <topology evidence="1">Multi-pass membrane protein</topology>
    </subcellularLocation>
</comment>
<comment type="similarity">
    <text evidence="3">Belongs to the fimbrial export usher family.</text>
</comment>
<protein>
    <recommendedName>
        <fullName>Outer membrane usher protein LpfC</fullName>
    </recommendedName>
</protein>
<evidence type="ECO:0000250" key="1"/>
<evidence type="ECO:0000255" key="2"/>
<evidence type="ECO:0000305" key="3"/>
<name>LPFC_SALTY</name>
<gene>
    <name type="primary">lpfC</name>
    <name type="ordered locus">STM3638</name>
</gene>
<organism>
    <name type="scientific">Salmonella typhimurium (strain LT2 / SGSC1412 / ATCC 700720)</name>
    <dbReference type="NCBI Taxonomy" id="99287"/>
    <lineage>
        <taxon>Bacteria</taxon>
        <taxon>Pseudomonadati</taxon>
        <taxon>Pseudomonadota</taxon>
        <taxon>Gammaproteobacteria</taxon>
        <taxon>Enterobacterales</taxon>
        <taxon>Enterobacteriaceae</taxon>
        <taxon>Salmonella</taxon>
    </lineage>
</organism>
<dbReference type="EMBL" id="U18559">
    <property type="protein sequence ID" value="AAA73968.1"/>
    <property type="molecule type" value="Genomic_DNA"/>
</dbReference>
<dbReference type="EMBL" id="AE006468">
    <property type="protein sequence ID" value="AAL22498.1"/>
    <property type="molecule type" value="Genomic_DNA"/>
</dbReference>
<dbReference type="PIR" id="C56271">
    <property type="entry name" value="C56271"/>
</dbReference>
<dbReference type="RefSeq" id="NP_462539.1">
    <property type="nucleotide sequence ID" value="NC_003197.2"/>
</dbReference>
<dbReference type="RefSeq" id="WP_000220312.1">
    <property type="nucleotide sequence ID" value="NC_003197.2"/>
</dbReference>
<dbReference type="SMR" id="P43662"/>
<dbReference type="STRING" id="99287.STM3638"/>
<dbReference type="PaxDb" id="99287-STM3638"/>
<dbReference type="GeneID" id="1255162"/>
<dbReference type="KEGG" id="stm:STM3638"/>
<dbReference type="PATRIC" id="fig|99287.12.peg.3847"/>
<dbReference type="HOGENOM" id="CLU_009120_3_1_6"/>
<dbReference type="OMA" id="VHTDWRG"/>
<dbReference type="PhylomeDB" id="P43662"/>
<dbReference type="BioCyc" id="SENT99287:STM3638-MONOMER"/>
<dbReference type="Proteomes" id="UP000001014">
    <property type="component" value="Chromosome"/>
</dbReference>
<dbReference type="GO" id="GO:0009279">
    <property type="term" value="C:cell outer membrane"/>
    <property type="evidence" value="ECO:0000318"/>
    <property type="project" value="GO_Central"/>
</dbReference>
<dbReference type="GO" id="GO:0015473">
    <property type="term" value="F:fimbrial usher porin activity"/>
    <property type="evidence" value="ECO:0000318"/>
    <property type="project" value="GO_Central"/>
</dbReference>
<dbReference type="GO" id="GO:0009297">
    <property type="term" value="P:pilus assembly"/>
    <property type="evidence" value="ECO:0000318"/>
    <property type="project" value="GO_Central"/>
</dbReference>
<dbReference type="FunFam" id="2.60.40.2070:FF:000001">
    <property type="entry name" value="Fimbrial outer membrane usher protein"/>
    <property type="match status" value="1"/>
</dbReference>
<dbReference type="FunFam" id="3.10.20.410:FF:000001">
    <property type="entry name" value="Fimbrial outer membrane usher protein"/>
    <property type="match status" value="1"/>
</dbReference>
<dbReference type="FunFam" id="2.60.40.2610:FF:000001">
    <property type="entry name" value="Outer membrane fimbrial usher protein"/>
    <property type="match status" value="1"/>
</dbReference>
<dbReference type="FunFam" id="2.60.40.3110:FF:000001">
    <property type="entry name" value="Putative fimbrial outer membrane usher"/>
    <property type="match status" value="1"/>
</dbReference>
<dbReference type="Gene3D" id="2.60.40.2070">
    <property type="match status" value="1"/>
</dbReference>
<dbReference type="Gene3D" id="2.60.40.3110">
    <property type="match status" value="1"/>
</dbReference>
<dbReference type="Gene3D" id="3.10.20.410">
    <property type="match status" value="1"/>
</dbReference>
<dbReference type="Gene3D" id="2.60.40.2610">
    <property type="entry name" value="Outer membrane usher protein FimD, plug domain"/>
    <property type="match status" value="1"/>
</dbReference>
<dbReference type="InterPro" id="IPR000015">
    <property type="entry name" value="Fimb_usher"/>
</dbReference>
<dbReference type="InterPro" id="IPR018030">
    <property type="entry name" value="Fimbrial_membr_usher_CS"/>
</dbReference>
<dbReference type="InterPro" id="IPR042186">
    <property type="entry name" value="FimD_plug_dom"/>
</dbReference>
<dbReference type="InterPro" id="IPR025949">
    <property type="entry name" value="PapC-like_C"/>
</dbReference>
<dbReference type="InterPro" id="IPR043142">
    <property type="entry name" value="PapC-like_C_sf"/>
</dbReference>
<dbReference type="InterPro" id="IPR025885">
    <property type="entry name" value="PapC_N"/>
</dbReference>
<dbReference type="InterPro" id="IPR037224">
    <property type="entry name" value="PapC_N_sf"/>
</dbReference>
<dbReference type="NCBIfam" id="NF011754">
    <property type="entry name" value="PRK15207.1"/>
    <property type="match status" value="1"/>
</dbReference>
<dbReference type="PANTHER" id="PTHR30451:SF21">
    <property type="entry name" value="FIMBRIAL USHER DOMAIN-CONTAINING PROTEIN YDET-RELATED"/>
    <property type="match status" value="1"/>
</dbReference>
<dbReference type="PANTHER" id="PTHR30451">
    <property type="entry name" value="OUTER MEMBRANE USHER PROTEIN"/>
    <property type="match status" value="1"/>
</dbReference>
<dbReference type="Pfam" id="PF13953">
    <property type="entry name" value="PapC_C"/>
    <property type="match status" value="1"/>
</dbReference>
<dbReference type="Pfam" id="PF13954">
    <property type="entry name" value="PapC_N"/>
    <property type="match status" value="1"/>
</dbReference>
<dbReference type="Pfam" id="PF00577">
    <property type="entry name" value="Usher"/>
    <property type="match status" value="1"/>
</dbReference>
<dbReference type="SUPFAM" id="SSF141729">
    <property type="entry name" value="FimD N-terminal domain-like"/>
    <property type="match status" value="1"/>
</dbReference>
<dbReference type="PROSITE" id="PS01151">
    <property type="entry name" value="FIMBRIAL_USHER"/>
    <property type="match status" value="1"/>
</dbReference>